<comment type="function">
    <text evidence="4">Involved in targeting and insertion of nascent membrane proteins into the cytoplasmic membrane. Binds to the hydrophobic signal sequence of the ribosome-nascent chain (RNC) as it emerges from the ribosomes. The SRP-RNC complex is then targeted to the cytoplasmic membrane where it interacts with the SRP receptor FtsY (Probable).</text>
</comment>
<comment type="catalytic activity">
    <reaction evidence="1">
        <text>GTP + H2O = GDP + phosphate + H(+)</text>
        <dbReference type="Rhea" id="RHEA:19669"/>
        <dbReference type="ChEBI" id="CHEBI:15377"/>
        <dbReference type="ChEBI" id="CHEBI:15378"/>
        <dbReference type="ChEBI" id="CHEBI:37565"/>
        <dbReference type="ChEBI" id="CHEBI:43474"/>
        <dbReference type="ChEBI" id="CHEBI:58189"/>
        <dbReference type="EC" id="3.6.5.4"/>
    </reaction>
</comment>
<comment type="subunit">
    <text evidence="1 2">Part of the signal recognition particle protein translocation system, which is composed of SRP and FtsY. Archaeal SRP consists of a 7S RNA molecule of 300 nucleotides and two protein subunits: SRP54 and SRP19.</text>
</comment>
<comment type="subcellular location">
    <subcellularLocation>
        <location evidence="1 2">Cytoplasm</location>
    </subcellularLocation>
    <text evidence="3">The SRP-RNC complex is targeted to the cytoplasmic membrane.</text>
</comment>
<comment type="domain">
    <text evidence="1">Composed of three domains: the N-terminal N domain, which is responsible for interactions with the ribosome, the central G domain, which binds GTP, and the C-terminal M domain, which binds the RNA and the signal sequence of the RNC.</text>
</comment>
<comment type="similarity">
    <text evidence="1">Belongs to the GTP-binding SRP family. SRP54 subfamily.</text>
</comment>
<reference key="1">
    <citation type="journal article" date="1997" name="Nature">
        <title>The complete genome sequence of the hyperthermophilic, sulphate-reducing archaeon Archaeoglobus fulgidus.</title>
        <authorList>
            <person name="Klenk H.-P."/>
            <person name="Clayton R.A."/>
            <person name="Tomb J.-F."/>
            <person name="White O."/>
            <person name="Nelson K.E."/>
            <person name="Ketchum K.A."/>
            <person name="Dodson R.J."/>
            <person name="Gwinn M.L."/>
            <person name="Hickey E.K."/>
            <person name="Peterson J.D."/>
            <person name="Richardson D.L."/>
            <person name="Kerlavage A.R."/>
            <person name="Graham D.E."/>
            <person name="Kyrpides N.C."/>
            <person name="Fleischmann R.D."/>
            <person name="Quackenbush J."/>
            <person name="Lee N.H."/>
            <person name="Sutton G.G."/>
            <person name="Gill S.R."/>
            <person name="Kirkness E.F."/>
            <person name="Dougherty B.A."/>
            <person name="McKenney K."/>
            <person name="Adams M.D."/>
            <person name="Loftus B.J."/>
            <person name="Peterson S.N."/>
            <person name="Reich C.I."/>
            <person name="McNeil L.K."/>
            <person name="Badger J.H."/>
            <person name="Glodek A."/>
            <person name="Zhou L."/>
            <person name="Overbeek R."/>
            <person name="Gocayne J.D."/>
            <person name="Weidman J.F."/>
            <person name="McDonald L.A."/>
            <person name="Utterback T.R."/>
            <person name="Cotton M.D."/>
            <person name="Spriggs T."/>
            <person name="Artiach P."/>
            <person name="Kaine B.P."/>
            <person name="Sykes S.M."/>
            <person name="Sadow P.W."/>
            <person name="D'Andrea K.P."/>
            <person name="Bowman C."/>
            <person name="Fujii C."/>
            <person name="Garland S.A."/>
            <person name="Mason T.M."/>
            <person name="Olsen G.J."/>
            <person name="Fraser C.M."/>
            <person name="Smith H.O."/>
            <person name="Woese C.R."/>
            <person name="Venter J.C."/>
        </authorList>
    </citation>
    <scope>NUCLEOTIDE SEQUENCE [LARGE SCALE GENOMIC DNA]</scope>
    <source>
        <strain>ATCC 49558 / DSM 4304 / JCM 9628 / NBRC 100126 / VC-16</strain>
    </source>
</reference>
<reference key="2">
    <citation type="journal article" date="2000" name="Nucleic Acids Res.">
        <title>Assembly of archaeal signal recognition particle from recombinant components.</title>
        <authorList>
            <person name="Bhuiyan S.H."/>
            <person name="Gowda K."/>
            <person name="Hotokezaka H."/>
            <person name="Zwieb C."/>
        </authorList>
    </citation>
    <scope>FUNCTION</scope>
    <scope>SUBUNIT</scope>
    <scope>SUBCELLULAR LOCATION</scope>
</reference>
<name>SRP54_ARCFU</name>
<gene>
    <name evidence="1" type="primary">srp54</name>
    <name type="ordered locus">AF_0622</name>
</gene>
<proteinExistence type="evidence at protein level"/>
<accession>O29633</accession>
<dbReference type="EC" id="3.6.5.4" evidence="1"/>
<dbReference type="EMBL" id="AE000782">
    <property type="protein sequence ID" value="AAB90619.1"/>
    <property type="molecule type" value="Genomic_DNA"/>
</dbReference>
<dbReference type="PIR" id="F69327">
    <property type="entry name" value="F69327"/>
</dbReference>
<dbReference type="RefSeq" id="WP_010878126.1">
    <property type="nucleotide sequence ID" value="NC_000917.1"/>
</dbReference>
<dbReference type="PDB" id="2JQE">
    <property type="method" value="NMR"/>
    <property type="chains" value="A=313-425"/>
</dbReference>
<dbReference type="PDBsum" id="2JQE"/>
<dbReference type="BMRB" id="O29633"/>
<dbReference type="SMR" id="O29633"/>
<dbReference type="STRING" id="224325.AF_0622"/>
<dbReference type="PaxDb" id="224325-AF_0622"/>
<dbReference type="EnsemblBacteria" id="AAB90619">
    <property type="protein sequence ID" value="AAB90619"/>
    <property type="gene ID" value="AF_0622"/>
</dbReference>
<dbReference type="GeneID" id="24794225"/>
<dbReference type="KEGG" id="afu:AF_0622"/>
<dbReference type="eggNOG" id="arCOG01228">
    <property type="taxonomic scope" value="Archaea"/>
</dbReference>
<dbReference type="HOGENOM" id="CLU_009301_6_0_2"/>
<dbReference type="OrthoDB" id="52849at2157"/>
<dbReference type="PhylomeDB" id="O29633"/>
<dbReference type="EvolutionaryTrace" id="O29633"/>
<dbReference type="Proteomes" id="UP000002199">
    <property type="component" value="Chromosome"/>
</dbReference>
<dbReference type="GO" id="GO:0048500">
    <property type="term" value="C:signal recognition particle"/>
    <property type="evidence" value="ECO:0007669"/>
    <property type="project" value="UniProtKB-UniRule"/>
</dbReference>
<dbReference type="GO" id="GO:0008312">
    <property type="term" value="F:7S RNA binding"/>
    <property type="evidence" value="ECO:0007669"/>
    <property type="project" value="UniProtKB-UniRule"/>
</dbReference>
<dbReference type="GO" id="GO:0016887">
    <property type="term" value="F:ATP hydrolysis activity"/>
    <property type="evidence" value="ECO:0007669"/>
    <property type="project" value="InterPro"/>
</dbReference>
<dbReference type="GO" id="GO:0005525">
    <property type="term" value="F:GTP binding"/>
    <property type="evidence" value="ECO:0007669"/>
    <property type="project" value="UniProtKB-UniRule"/>
</dbReference>
<dbReference type="GO" id="GO:0003924">
    <property type="term" value="F:GTPase activity"/>
    <property type="evidence" value="ECO:0007669"/>
    <property type="project" value="UniProtKB-UniRule"/>
</dbReference>
<dbReference type="GO" id="GO:0006614">
    <property type="term" value="P:SRP-dependent cotranslational protein targeting to membrane"/>
    <property type="evidence" value="ECO:0007669"/>
    <property type="project" value="InterPro"/>
</dbReference>
<dbReference type="CDD" id="cd17875">
    <property type="entry name" value="SRP54_G"/>
    <property type="match status" value="1"/>
</dbReference>
<dbReference type="FunFam" id="3.40.50.300:FF:000022">
    <property type="entry name" value="Signal recognition particle 54 kDa subunit"/>
    <property type="match status" value="1"/>
</dbReference>
<dbReference type="Gene3D" id="3.40.50.300">
    <property type="entry name" value="P-loop containing nucleotide triphosphate hydrolases"/>
    <property type="match status" value="1"/>
</dbReference>
<dbReference type="Gene3D" id="1.20.120.140">
    <property type="entry name" value="Signal recognition particle SRP54, nucleotide-binding domain"/>
    <property type="match status" value="1"/>
</dbReference>
<dbReference type="Gene3D" id="1.10.260.30">
    <property type="entry name" value="Signal recognition particle, SRP54 subunit, M-domain"/>
    <property type="match status" value="1"/>
</dbReference>
<dbReference type="HAMAP" id="MF_00306">
    <property type="entry name" value="SRP54"/>
    <property type="match status" value="1"/>
</dbReference>
<dbReference type="InterPro" id="IPR003593">
    <property type="entry name" value="AAA+_ATPase"/>
</dbReference>
<dbReference type="InterPro" id="IPR027417">
    <property type="entry name" value="P-loop_NTPase"/>
</dbReference>
<dbReference type="InterPro" id="IPR036891">
    <property type="entry name" value="Signal_recog_part_SRP54_M_sf"/>
</dbReference>
<dbReference type="InterPro" id="IPR013822">
    <property type="entry name" value="Signal_recog_particl_SRP54_hlx"/>
</dbReference>
<dbReference type="InterPro" id="IPR004125">
    <property type="entry name" value="Signal_recog_particle_SRP54_M"/>
</dbReference>
<dbReference type="InterPro" id="IPR036225">
    <property type="entry name" value="SRP/SRP_N"/>
</dbReference>
<dbReference type="InterPro" id="IPR022941">
    <property type="entry name" value="SRP54"/>
</dbReference>
<dbReference type="InterPro" id="IPR000897">
    <property type="entry name" value="SRP54_GTPase_dom"/>
</dbReference>
<dbReference type="InterPro" id="IPR042101">
    <property type="entry name" value="SRP54_N_sf"/>
</dbReference>
<dbReference type="PANTHER" id="PTHR11564">
    <property type="entry name" value="SIGNAL RECOGNITION PARTICLE 54K PROTEIN SRP54"/>
    <property type="match status" value="1"/>
</dbReference>
<dbReference type="PANTHER" id="PTHR11564:SF5">
    <property type="entry name" value="SIGNAL RECOGNITION PARTICLE SUBUNIT SRP54"/>
    <property type="match status" value="1"/>
</dbReference>
<dbReference type="Pfam" id="PF00448">
    <property type="entry name" value="SRP54"/>
    <property type="match status" value="1"/>
</dbReference>
<dbReference type="Pfam" id="PF02881">
    <property type="entry name" value="SRP54_N"/>
    <property type="match status" value="1"/>
</dbReference>
<dbReference type="Pfam" id="PF02978">
    <property type="entry name" value="SRP_SPB"/>
    <property type="match status" value="1"/>
</dbReference>
<dbReference type="SMART" id="SM00382">
    <property type="entry name" value="AAA"/>
    <property type="match status" value="1"/>
</dbReference>
<dbReference type="SMART" id="SM00962">
    <property type="entry name" value="SRP54"/>
    <property type="match status" value="1"/>
</dbReference>
<dbReference type="SMART" id="SM00963">
    <property type="entry name" value="SRP54_N"/>
    <property type="match status" value="1"/>
</dbReference>
<dbReference type="SUPFAM" id="SSF47364">
    <property type="entry name" value="Domain of the SRP/SRP receptor G-proteins"/>
    <property type="match status" value="1"/>
</dbReference>
<dbReference type="SUPFAM" id="SSF52540">
    <property type="entry name" value="P-loop containing nucleoside triphosphate hydrolases"/>
    <property type="match status" value="1"/>
</dbReference>
<dbReference type="SUPFAM" id="SSF47446">
    <property type="entry name" value="Signal peptide-binding domain"/>
    <property type="match status" value="1"/>
</dbReference>
<dbReference type="PROSITE" id="PS00300">
    <property type="entry name" value="SRP54"/>
    <property type="match status" value="1"/>
</dbReference>
<protein>
    <recommendedName>
        <fullName evidence="1">Signal recognition particle 54 kDa protein</fullName>
        <shortName evidence="1">SRP54</shortName>
        <ecNumber evidence="1">3.6.5.4</ecNumber>
    </recommendedName>
</protein>
<evidence type="ECO:0000255" key="1">
    <source>
        <dbReference type="HAMAP-Rule" id="MF_00306"/>
    </source>
</evidence>
<evidence type="ECO:0000269" key="2">
    <source>
    </source>
</evidence>
<evidence type="ECO:0000305" key="3"/>
<evidence type="ECO:0000305" key="4">
    <source>
    </source>
</evidence>
<evidence type="ECO:0007829" key="5">
    <source>
        <dbReference type="PDB" id="2JQE"/>
    </source>
</evidence>
<sequence>MALESLKEVARKIAGSSSIDKKFVEEMVKEIQRALIKADVNVRQVKEISDAIKKRALSEDVLPALNAKEQILKIVYEELLRGVGEGLEIPLKKAKIMLVGLQGSGKTTTTAKMAKYFKDRGMKVAVVAADTWRPAAYEQLRQLAEEYGITFYGEKGEKDAVKIVKNALEKLKDHDMIIIDTAGRHALEDELIDEMIKIAEVARPDYKLLVLDAAIGQLASKQAQAFHEAIGINGIIITKFDGTAKGGGALSAARQIGIPIAFIGTGEKVEDFERFDPAGFVSRLLGMGDIKALMEKIERIASEEELDPEAFLKGTFTLKDIYKQIEAMNKMGPVRKIFEMLPFGLGLKVDNDVMEMTQEKMKKFRVIMDSMTEEELLNPKIIDSSRIRRIAIGSGTSPQEVKELLNYYKTMKNLMKKMKKNKLPIKGLGKLGF</sequence>
<organism>
    <name type="scientific">Archaeoglobus fulgidus (strain ATCC 49558 / DSM 4304 / JCM 9628 / NBRC 100126 / VC-16)</name>
    <dbReference type="NCBI Taxonomy" id="224325"/>
    <lineage>
        <taxon>Archaea</taxon>
        <taxon>Methanobacteriati</taxon>
        <taxon>Methanobacteriota</taxon>
        <taxon>Archaeoglobi</taxon>
        <taxon>Archaeoglobales</taxon>
        <taxon>Archaeoglobaceae</taxon>
        <taxon>Archaeoglobus</taxon>
    </lineage>
</organism>
<keyword id="KW-0002">3D-structure</keyword>
<keyword id="KW-0963">Cytoplasm</keyword>
<keyword id="KW-0342">GTP-binding</keyword>
<keyword id="KW-0378">Hydrolase</keyword>
<keyword id="KW-0547">Nucleotide-binding</keyword>
<keyword id="KW-1185">Reference proteome</keyword>
<keyword id="KW-0687">Ribonucleoprotein</keyword>
<keyword id="KW-0694">RNA-binding</keyword>
<keyword id="KW-0733">Signal recognition particle</keyword>
<feature type="chain" id="PRO_0000101173" description="Signal recognition particle 54 kDa protein">
    <location>
        <begin position="1"/>
        <end position="433"/>
    </location>
</feature>
<feature type="binding site" evidence="1">
    <location>
        <begin position="100"/>
        <end position="107"/>
    </location>
    <ligand>
        <name>GTP</name>
        <dbReference type="ChEBI" id="CHEBI:37565"/>
    </ligand>
</feature>
<feature type="binding site" evidence="1">
    <location>
        <begin position="180"/>
        <end position="184"/>
    </location>
    <ligand>
        <name>GTP</name>
        <dbReference type="ChEBI" id="CHEBI:37565"/>
    </ligand>
</feature>
<feature type="binding site" evidence="1">
    <location>
        <begin position="238"/>
        <end position="241"/>
    </location>
    <ligand>
        <name>GTP</name>
        <dbReference type="ChEBI" id="CHEBI:37565"/>
    </ligand>
</feature>
<feature type="helix" evidence="5">
    <location>
        <begin position="319"/>
        <end position="325"/>
    </location>
</feature>
<feature type="helix" evidence="5">
    <location>
        <begin position="360"/>
        <end position="370"/>
    </location>
</feature>
<feature type="helix" evidence="5">
    <location>
        <begin position="373"/>
        <end position="377"/>
    </location>
</feature>
<feature type="helix" evidence="5">
    <location>
        <begin position="379"/>
        <end position="381"/>
    </location>
</feature>
<feature type="helix" evidence="5">
    <location>
        <begin position="384"/>
        <end position="394"/>
    </location>
</feature>
<feature type="helix" evidence="5">
    <location>
        <begin position="398"/>
        <end position="414"/>
    </location>
</feature>
<feature type="turn" evidence="5">
    <location>
        <begin position="415"/>
        <end position="417"/>
    </location>
</feature>